<proteinExistence type="inferred from homology"/>
<gene>
    <name evidence="1" type="primary">lepA</name>
    <name type="ordered locus">Ssed_1146</name>
</gene>
<comment type="function">
    <text evidence="1">Required for accurate and efficient protein synthesis under certain stress conditions. May act as a fidelity factor of the translation reaction, by catalyzing a one-codon backward translocation of tRNAs on improperly translocated ribosomes. Back-translocation proceeds from a post-translocation (POST) complex to a pre-translocation (PRE) complex, thus giving elongation factor G a second chance to translocate the tRNAs correctly. Binds to ribosomes in a GTP-dependent manner.</text>
</comment>
<comment type="catalytic activity">
    <reaction evidence="1">
        <text>GTP + H2O = GDP + phosphate + H(+)</text>
        <dbReference type="Rhea" id="RHEA:19669"/>
        <dbReference type="ChEBI" id="CHEBI:15377"/>
        <dbReference type="ChEBI" id="CHEBI:15378"/>
        <dbReference type="ChEBI" id="CHEBI:37565"/>
        <dbReference type="ChEBI" id="CHEBI:43474"/>
        <dbReference type="ChEBI" id="CHEBI:58189"/>
        <dbReference type="EC" id="3.6.5.n1"/>
    </reaction>
</comment>
<comment type="subcellular location">
    <subcellularLocation>
        <location evidence="1">Cell inner membrane</location>
        <topology evidence="1">Peripheral membrane protein</topology>
        <orientation evidence="1">Cytoplasmic side</orientation>
    </subcellularLocation>
</comment>
<comment type="similarity">
    <text evidence="1">Belongs to the TRAFAC class translation factor GTPase superfamily. Classic translation factor GTPase family. LepA subfamily.</text>
</comment>
<dbReference type="EC" id="3.6.5.n1" evidence="1"/>
<dbReference type="EMBL" id="CP000821">
    <property type="protein sequence ID" value="ABV35757.1"/>
    <property type="molecule type" value="Genomic_DNA"/>
</dbReference>
<dbReference type="RefSeq" id="WP_012141493.1">
    <property type="nucleotide sequence ID" value="NC_009831.1"/>
</dbReference>
<dbReference type="SMR" id="A8FSD4"/>
<dbReference type="STRING" id="425104.Ssed_1146"/>
<dbReference type="KEGG" id="sse:Ssed_1146"/>
<dbReference type="eggNOG" id="COG0481">
    <property type="taxonomic scope" value="Bacteria"/>
</dbReference>
<dbReference type="HOGENOM" id="CLU_009995_3_3_6"/>
<dbReference type="OrthoDB" id="9804431at2"/>
<dbReference type="Proteomes" id="UP000002015">
    <property type="component" value="Chromosome"/>
</dbReference>
<dbReference type="GO" id="GO:0005886">
    <property type="term" value="C:plasma membrane"/>
    <property type="evidence" value="ECO:0007669"/>
    <property type="project" value="UniProtKB-SubCell"/>
</dbReference>
<dbReference type="GO" id="GO:0005525">
    <property type="term" value="F:GTP binding"/>
    <property type="evidence" value="ECO:0007669"/>
    <property type="project" value="UniProtKB-UniRule"/>
</dbReference>
<dbReference type="GO" id="GO:0003924">
    <property type="term" value="F:GTPase activity"/>
    <property type="evidence" value="ECO:0007669"/>
    <property type="project" value="UniProtKB-UniRule"/>
</dbReference>
<dbReference type="GO" id="GO:0097216">
    <property type="term" value="F:guanosine tetraphosphate binding"/>
    <property type="evidence" value="ECO:0007669"/>
    <property type="project" value="UniProtKB-ARBA"/>
</dbReference>
<dbReference type="GO" id="GO:0043022">
    <property type="term" value="F:ribosome binding"/>
    <property type="evidence" value="ECO:0007669"/>
    <property type="project" value="UniProtKB-UniRule"/>
</dbReference>
<dbReference type="GO" id="GO:0003746">
    <property type="term" value="F:translation elongation factor activity"/>
    <property type="evidence" value="ECO:0007669"/>
    <property type="project" value="UniProtKB-UniRule"/>
</dbReference>
<dbReference type="GO" id="GO:0045727">
    <property type="term" value="P:positive regulation of translation"/>
    <property type="evidence" value="ECO:0007669"/>
    <property type="project" value="UniProtKB-UniRule"/>
</dbReference>
<dbReference type="CDD" id="cd03699">
    <property type="entry name" value="EF4_II"/>
    <property type="match status" value="1"/>
</dbReference>
<dbReference type="CDD" id="cd16260">
    <property type="entry name" value="EF4_III"/>
    <property type="match status" value="1"/>
</dbReference>
<dbReference type="CDD" id="cd01890">
    <property type="entry name" value="LepA"/>
    <property type="match status" value="1"/>
</dbReference>
<dbReference type="CDD" id="cd03709">
    <property type="entry name" value="lepA_C"/>
    <property type="match status" value="1"/>
</dbReference>
<dbReference type="FunFam" id="3.40.50.300:FF:000078">
    <property type="entry name" value="Elongation factor 4"/>
    <property type="match status" value="1"/>
</dbReference>
<dbReference type="FunFam" id="2.40.30.10:FF:000015">
    <property type="entry name" value="Translation factor GUF1, mitochondrial"/>
    <property type="match status" value="1"/>
</dbReference>
<dbReference type="FunFam" id="3.30.70.240:FF:000007">
    <property type="entry name" value="Translation factor GUF1, mitochondrial"/>
    <property type="match status" value="1"/>
</dbReference>
<dbReference type="FunFam" id="3.30.70.2570:FF:000001">
    <property type="entry name" value="Translation factor GUF1, mitochondrial"/>
    <property type="match status" value="1"/>
</dbReference>
<dbReference type="FunFam" id="3.30.70.870:FF:000004">
    <property type="entry name" value="Translation factor GUF1, mitochondrial"/>
    <property type="match status" value="1"/>
</dbReference>
<dbReference type="Gene3D" id="3.30.70.240">
    <property type="match status" value="1"/>
</dbReference>
<dbReference type="Gene3D" id="3.30.70.2570">
    <property type="entry name" value="Elongation factor 4, C-terminal domain"/>
    <property type="match status" value="1"/>
</dbReference>
<dbReference type="Gene3D" id="3.30.70.870">
    <property type="entry name" value="Elongation Factor G (Translational Gtpase), domain 3"/>
    <property type="match status" value="1"/>
</dbReference>
<dbReference type="Gene3D" id="3.40.50.300">
    <property type="entry name" value="P-loop containing nucleotide triphosphate hydrolases"/>
    <property type="match status" value="1"/>
</dbReference>
<dbReference type="Gene3D" id="2.40.30.10">
    <property type="entry name" value="Translation factors"/>
    <property type="match status" value="1"/>
</dbReference>
<dbReference type="HAMAP" id="MF_00071">
    <property type="entry name" value="LepA"/>
    <property type="match status" value="1"/>
</dbReference>
<dbReference type="InterPro" id="IPR006297">
    <property type="entry name" value="EF-4"/>
</dbReference>
<dbReference type="InterPro" id="IPR035647">
    <property type="entry name" value="EFG_III/V"/>
</dbReference>
<dbReference type="InterPro" id="IPR000640">
    <property type="entry name" value="EFG_V-like"/>
</dbReference>
<dbReference type="InterPro" id="IPR004161">
    <property type="entry name" value="EFTu-like_2"/>
</dbReference>
<dbReference type="InterPro" id="IPR031157">
    <property type="entry name" value="G_TR_CS"/>
</dbReference>
<dbReference type="InterPro" id="IPR038363">
    <property type="entry name" value="LepA_C_sf"/>
</dbReference>
<dbReference type="InterPro" id="IPR013842">
    <property type="entry name" value="LepA_CTD"/>
</dbReference>
<dbReference type="InterPro" id="IPR035654">
    <property type="entry name" value="LepA_IV"/>
</dbReference>
<dbReference type="InterPro" id="IPR027417">
    <property type="entry name" value="P-loop_NTPase"/>
</dbReference>
<dbReference type="InterPro" id="IPR005225">
    <property type="entry name" value="Small_GTP-bd"/>
</dbReference>
<dbReference type="InterPro" id="IPR000795">
    <property type="entry name" value="T_Tr_GTP-bd_dom"/>
</dbReference>
<dbReference type="NCBIfam" id="TIGR01393">
    <property type="entry name" value="lepA"/>
    <property type="match status" value="1"/>
</dbReference>
<dbReference type="NCBIfam" id="TIGR00231">
    <property type="entry name" value="small_GTP"/>
    <property type="match status" value="1"/>
</dbReference>
<dbReference type="PANTHER" id="PTHR43512:SF4">
    <property type="entry name" value="TRANSLATION FACTOR GUF1 HOMOLOG, CHLOROPLASTIC"/>
    <property type="match status" value="1"/>
</dbReference>
<dbReference type="PANTHER" id="PTHR43512">
    <property type="entry name" value="TRANSLATION FACTOR GUF1-RELATED"/>
    <property type="match status" value="1"/>
</dbReference>
<dbReference type="Pfam" id="PF00679">
    <property type="entry name" value="EFG_C"/>
    <property type="match status" value="1"/>
</dbReference>
<dbReference type="Pfam" id="PF00009">
    <property type="entry name" value="GTP_EFTU"/>
    <property type="match status" value="1"/>
</dbReference>
<dbReference type="Pfam" id="PF03144">
    <property type="entry name" value="GTP_EFTU_D2"/>
    <property type="match status" value="1"/>
</dbReference>
<dbReference type="Pfam" id="PF06421">
    <property type="entry name" value="LepA_C"/>
    <property type="match status" value="1"/>
</dbReference>
<dbReference type="PRINTS" id="PR00315">
    <property type="entry name" value="ELONGATNFCT"/>
</dbReference>
<dbReference type="SUPFAM" id="SSF54980">
    <property type="entry name" value="EF-G C-terminal domain-like"/>
    <property type="match status" value="2"/>
</dbReference>
<dbReference type="SUPFAM" id="SSF52540">
    <property type="entry name" value="P-loop containing nucleoside triphosphate hydrolases"/>
    <property type="match status" value="1"/>
</dbReference>
<dbReference type="PROSITE" id="PS00301">
    <property type="entry name" value="G_TR_1"/>
    <property type="match status" value="1"/>
</dbReference>
<dbReference type="PROSITE" id="PS51722">
    <property type="entry name" value="G_TR_2"/>
    <property type="match status" value="1"/>
</dbReference>
<keyword id="KW-0997">Cell inner membrane</keyword>
<keyword id="KW-1003">Cell membrane</keyword>
<keyword id="KW-0342">GTP-binding</keyword>
<keyword id="KW-0378">Hydrolase</keyword>
<keyword id="KW-0472">Membrane</keyword>
<keyword id="KW-0547">Nucleotide-binding</keyword>
<keyword id="KW-0648">Protein biosynthesis</keyword>
<keyword id="KW-1185">Reference proteome</keyword>
<name>LEPA_SHESH</name>
<accession>A8FSD4</accession>
<organism>
    <name type="scientific">Shewanella sediminis (strain HAW-EB3)</name>
    <dbReference type="NCBI Taxonomy" id="425104"/>
    <lineage>
        <taxon>Bacteria</taxon>
        <taxon>Pseudomonadati</taxon>
        <taxon>Pseudomonadota</taxon>
        <taxon>Gammaproteobacteria</taxon>
        <taxon>Alteromonadales</taxon>
        <taxon>Shewanellaceae</taxon>
        <taxon>Shewanella</taxon>
    </lineage>
</organism>
<protein>
    <recommendedName>
        <fullName evidence="1">Elongation factor 4</fullName>
        <shortName evidence="1">EF-4</shortName>
        <ecNumber evidence="1">3.6.5.n1</ecNumber>
    </recommendedName>
    <alternativeName>
        <fullName evidence="1">Ribosomal back-translocase LepA</fullName>
    </alternativeName>
</protein>
<feature type="chain" id="PRO_1000075149" description="Elongation factor 4">
    <location>
        <begin position="1"/>
        <end position="596"/>
    </location>
</feature>
<feature type="domain" description="tr-type G">
    <location>
        <begin position="2"/>
        <end position="184"/>
    </location>
</feature>
<feature type="binding site" evidence="1">
    <location>
        <begin position="14"/>
        <end position="19"/>
    </location>
    <ligand>
        <name>GTP</name>
        <dbReference type="ChEBI" id="CHEBI:37565"/>
    </ligand>
</feature>
<feature type="binding site" evidence="1">
    <location>
        <begin position="131"/>
        <end position="134"/>
    </location>
    <ligand>
        <name>GTP</name>
        <dbReference type="ChEBI" id="CHEBI:37565"/>
    </ligand>
</feature>
<reference key="1">
    <citation type="submission" date="2007-08" db="EMBL/GenBank/DDBJ databases">
        <title>Complete sequence of Shewanella sediminis HAW-EB3.</title>
        <authorList>
            <consortium name="US DOE Joint Genome Institute"/>
            <person name="Copeland A."/>
            <person name="Lucas S."/>
            <person name="Lapidus A."/>
            <person name="Barry K."/>
            <person name="Glavina del Rio T."/>
            <person name="Dalin E."/>
            <person name="Tice H."/>
            <person name="Pitluck S."/>
            <person name="Chertkov O."/>
            <person name="Brettin T."/>
            <person name="Bruce D."/>
            <person name="Detter J.C."/>
            <person name="Han C."/>
            <person name="Schmutz J."/>
            <person name="Larimer F."/>
            <person name="Land M."/>
            <person name="Hauser L."/>
            <person name="Kyrpides N."/>
            <person name="Kim E."/>
            <person name="Zhao J.-S."/>
            <person name="Richardson P."/>
        </authorList>
    </citation>
    <scope>NUCLEOTIDE SEQUENCE [LARGE SCALE GENOMIC DNA]</scope>
    <source>
        <strain>HAW-EB3</strain>
    </source>
</reference>
<sequence>MKHIRNFSIIAHIDHGKSTLSDRLIQECGGLSDREMAAQVLDSMDIERERGITIKAQSVTLDYKAQDGETYQLNFIDTPGHVDFSYEVSRSLAACEGALLVVDAGQGVEAQTLANCYTALEMDMDVVPVLNKIDLPQADPERVADEIEDIVGIEAADAVRCSAKTGIGIKDVLEVIVAQIPSPEGDPEGPLQALIIDSWFDSYQGVVSLVRIKNGVLRKGDKFKVMSTGQNYNADRVGIFTPKQTDTTELKTGEVGFIIAGIKEIHGAPVGDTLTHAKHGADKPLAGFKKVKPQVYAGLFPISTDDYESFRDALNKLSLNDASLFFEPETSSALGFGFRIGFLGLLHMEIIQERLEREYNLDLITTAPTVVYEIVKTSGETIYVDNPSDLPAINNIEEMREPIVETNILVPKEYLGNVITLCVEKRGVQKNLVYHGNQVALTYELPMAEVVMDFFDRLKSTSRGYASLEYNFIRFEPADMVRLDILINGDRVDALAMIIHKGLIRSKGLALVNKMKELIPRQMFDIAVQAAVGSQIIARSSIKAMRKDVTAKCYGGDVSRKKKLLNKQKEGKKRMKQVGNVEVPQEAFLAVLKLND</sequence>
<evidence type="ECO:0000255" key="1">
    <source>
        <dbReference type="HAMAP-Rule" id="MF_00071"/>
    </source>
</evidence>